<feature type="chain" id="PRO_1000215959" description="Tyrosine recombinase XerC">
    <location>
        <begin position="1"/>
        <end position="305"/>
    </location>
</feature>
<feature type="domain" description="Core-binding (CB)" evidence="3">
    <location>
        <begin position="4"/>
        <end position="95"/>
    </location>
</feature>
<feature type="domain" description="Tyr recombinase" evidence="2">
    <location>
        <begin position="116"/>
        <end position="298"/>
    </location>
</feature>
<feature type="active site" evidence="1">
    <location>
        <position position="159"/>
    </location>
</feature>
<feature type="active site" evidence="1">
    <location>
        <position position="182"/>
    </location>
</feature>
<feature type="active site" evidence="1">
    <location>
        <position position="250"/>
    </location>
</feature>
<feature type="active site" evidence="1">
    <location>
        <position position="253"/>
    </location>
</feature>
<feature type="active site" evidence="1">
    <location>
        <position position="276"/>
    </location>
</feature>
<feature type="active site" description="O-(3'-phospho-DNA)-tyrosine intermediate" evidence="1">
    <location>
        <position position="285"/>
    </location>
</feature>
<organism>
    <name type="scientific">Rickettsia peacockii (strain Rustic)</name>
    <dbReference type="NCBI Taxonomy" id="562019"/>
    <lineage>
        <taxon>Bacteria</taxon>
        <taxon>Pseudomonadati</taxon>
        <taxon>Pseudomonadota</taxon>
        <taxon>Alphaproteobacteria</taxon>
        <taxon>Rickettsiales</taxon>
        <taxon>Rickettsiaceae</taxon>
        <taxon>Rickettsieae</taxon>
        <taxon>Rickettsia</taxon>
        <taxon>spotted fever group</taxon>
    </lineage>
</organism>
<reference key="1">
    <citation type="journal article" date="2009" name="PLoS ONE">
        <title>Genome sequence of the endosymbiont Rickettsia peacockii and comparison with virulent Rickettsia rickettsii: identification of virulence factors.</title>
        <authorList>
            <person name="Felsheim R.F."/>
            <person name="Kurtti T.J."/>
            <person name="Munderloh U.G."/>
        </authorList>
    </citation>
    <scope>NUCLEOTIDE SEQUENCE [LARGE SCALE GENOMIC DNA]</scope>
    <source>
        <strain>Rustic</strain>
    </source>
</reference>
<comment type="function">
    <text evidence="1">Site-specific tyrosine recombinase, which acts by catalyzing the cutting and rejoining of the recombining DNA molecules. The XerC-XerD complex is essential to convert dimers of the bacterial chromosome into monomers to permit their segregation at cell division. It also contributes to the segregational stability of plasmids.</text>
</comment>
<comment type="subunit">
    <text evidence="1">Forms a cyclic heterotetrameric complex composed of two molecules of XerC and two molecules of XerD.</text>
</comment>
<comment type="subcellular location">
    <subcellularLocation>
        <location evidence="1">Cytoplasm</location>
    </subcellularLocation>
</comment>
<comment type="similarity">
    <text evidence="1">Belongs to the 'phage' integrase family. XerC subfamily.</text>
</comment>
<name>XERC_RICPU</name>
<proteinExistence type="inferred from homology"/>
<gene>
    <name evidence="1" type="primary">xerC</name>
    <name type="ordered locus">RPR_05205</name>
</gene>
<protein>
    <recommendedName>
        <fullName evidence="1">Tyrosine recombinase XerC</fullName>
    </recommendedName>
</protein>
<evidence type="ECO:0000255" key="1">
    <source>
        <dbReference type="HAMAP-Rule" id="MF_01808"/>
    </source>
</evidence>
<evidence type="ECO:0000255" key="2">
    <source>
        <dbReference type="PROSITE-ProRule" id="PRU01246"/>
    </source>
</evidence>
<evidence type="ECO:0000255" key="3">
    <source>
        <dbReference type="PROSITE-ProRule" id="PRU01248"/>
    </source>
</evidence>
<sequence>MLDTSIQALINKWQKYLVLQRNYSNHTVISYNNDLKHFLEFMNYYNSELVTINHIKTADIRLIRSWLAKRNCDNFTASSISRGLSAVKNFYRFLEKTTQLNSHIIFSIKSPKKTKLLPKALSEDDVVISLEHIEEYGNVKWVELRNKALLVLIYASGLRISEALSITKLHLQNLEFIRIIGKGSKERIIPWLPIAKNLITQYLEILPYKLGDNEPIFRGKQGKELQPSVFNRELIKLKHFYGLPQHLTAHSFRHSFASHLLEHGADLRSLQELLGHKSLSTTQNYTKTSIKHLEAVYTTAYPIKK</sequence>
<keyword id="KW-0131">Cell cycle</keyword>
<keyword id="KW-0132">Cell division</keyword>
<keyword id="KW-0159">Chromosome partition</keyword>
<keyword id="KW-0963">Cytoplasm</keyword>
<keyword id="KW-0229">DNA integration</keyword>
<keyword id="KW-0233">DNA recombination</keyword>
<keyword id="KW-0238">DNA-binding</keyword>
<dbReference type="EMBL" id="CP001227">
    <property type="protein sequence ID" value="ACR47654.1"/>
    <property type="molecule type" value="Genomic_DNA"/>
</dbReference>
<dbReference type="RefSeq" id="WP_012736863.1">
    <property type="nucleotide sequence ID" value="NC_012730.1"/>
</dbReference>
<dbReference type="SMR" id="C4K256"/>
<dbReference type="KEGG" id="rpk:RPR_05205"/>
<dbReference type="HOGENOM" id="CLU_027562_9_0_5"/>
<dbReference type="Proteomes" id="UP000005015">
    <property type="component" value="Chromosome"/>
</dbReference>
<dbReference type="GO" id="GO:0005737">
    <property type="term" value="C:cytoplasm"/>
    <property type="evidence" value="ECO:0007669"/>
    <property type="project" value="UniProtKB-SubCell"/>
</dbReference>
<dbReference type="GO" id="GO:0003677">
    <property type="term" value="F:DNA binding"/>
    <property type="evidence" value="ECO:0007669"/>
    <property type="project" value="UniProtKB-KW"/>
</dbReference>
<dbReference type="GO" id="GO:0009037">
    <property type="term" value="F:tyrosine-based site-specific recombinase activity"/>
    <property type="evidence" value="ECO:0007669"/>
    <property type="project" value="UniProtKB-UniRule"/>
</dbReference>
<dbReference type="GO" id="GO:0051301">
    <property type="term" value="P:cell division"/>
    <property type="evidence" value="ECO:0007669"/>
    <property type="project" value="UniProtKB-KW"/>
</dbReference>
<dbReference type="GO" id="GO:0007059">
    <property type="term" value="P:chromosome segregation"/>
    <property type="evidence" value="ECO:0007669"/>
    <property type="project" value="UniProtKB-UniRule"/>
</dbReference>
<dbReference type="GO" id="GO:0006313">
    <property type="term" value="P:DNA transposition"/>
    <property type="evidence" value="ECO:0007669"/>
    <property type="project" value="UniProtKB-UniRule"/>
</dbReference>
<dbReference type="Gene3D" id="1.10.150.130">
    <property type="match status" value="1"/>
</dbReference>
<dbReference type="Gene3D" id="1.10.443.10">
    <property type="entry name" value="Intergrase catalytic core"/>
    <property type="match status" value="1"/>
</dbReference>
<dbReference type="HAMAP" id="MF_01808">
    <property type="entry name" value="Recomb_XerC_XerD"/>
    <property type="match status" value="1"/>
</dbReference>
<dbReference type="InterPro" id="IPR044068">
    <property type="entry name" value="CB"/>
</dbReference>
<dbReference type="InterPro" id="IPR011010">
    <property type="entry name" value="DNA_brk_join_enz"/>
</dbReference>
<dbReference type="InterPro" id="IPR013762">
    <property type="entry name" value="Integrase-like_cat_sf"/>
</dbReference>
<dbReference type="InterPro" id="IPR002104">
    <property type="entry name" value="Integrase_catalytic"/>
</dbReference>
<dbReference type="InterPro" id="IPR010998">
    <property type="entry name" value="Integrase_recombinase_N"/>
</dbReference>
<dbReference type="InterPro" id="IPR004107">
    <property type="entry name" value="Integrase_SAM-like_N"/>
</dbReference>
<dbReference type="InterPro" id="IPR023009">
    <property type="entry name" value="Tyrosine_recombinase_XerC/XerD"/>
</dbReference>
<dbReference type="InterPro" id="IPR050090">
    <property type="entry name" value="Tyrosine_recombinase_XerCD"/>
</dbReference>
<dbReference type="PANTHER" id="PTHR30349">
    <property type="entry name" value="PHAGE INTEGRASE-RELATED"/>
    <property type="match status" value="1"/>
</dbReference>
<dbReference type="PANTHER" id="PTHR30349:SF90">
    <property type="entry name" value="TYROSINE RECOMBINASE XERD"/>
    <property type="match status" value="1"/>
</dbReference>
<dbReference type="Pfam" id="PF02899">
    <property type="entry name" value="Phage_int_SAM_1"/>
    <property type="match status" value="1"/>
</dbReference>
<dbReference type="Pfam" id="PF00589">
    <property type="entry name" value="Phage_integrase"/>
    <property type="match status" value="1"/>
</dbReference>
<dbReference type="SUPFAM" id="SSF56349">
    <property type="entry name" value="DNA breaking-rejoining enzymes"/>
    <property type="match status" value="1"/>
</dbReference>
<dbReference type="PROSITE" id="PS51900">
    <property type="entry name" value="CB"/>
    <property type="match status" value="1"/>
</dbReference>
<dbReference type="PROSITE" id="PS51898">
    <property type="entry name" value="TYR_RECOMBINASE"/>
    <property type="match status" value="1"/>
</dbReference>
<accession>C4K256</accession>